<accession>Q17GM7</accession>
<keyword id="KW-0496">Mitochondrion</keyword>
<keyword id="KW-1185">Reference proteome</keyword>
<keyword id="KW-0808">Transferase</keyword>
<keyword id="KW-0809">Transit peptide</keyword>
<keyword id="KW-0816">Tricarboxylic acid cycle</keyword>
<reference key="1">
    <citation type="journal article" date="2007" name="Science">
        <title>Genome sequence of Aedes aegypti, a major arbovirus vector.</title>
        <authorList>
            <person name="Nene V."/>
            <person name="Wortman J.R."/>
            <person name="Lawson D."/>
            <person name="Haas B.J."/>
            <person name="Kodira C.D."/>
            <person name="Tu Z.J."/>
            <person name="Loftus B.J."/>
            <person name="Xi Z."/>
            <person name="Megy K."/>
            <person name="Grabherr M."/>
            <person name="Ren Q."/>
            <person name="Zdobnov E.M."/>
            <person name="Lobo N.F."/>
            <person name="Campbell K.S."/>
            <person name="Brown S.E."/>
            <person name="Bonaldo M.F."/>
            <person name="Zhu J."/>
            <person name="Sinkins S.P."/>
            <person name="Hogenkamp D.G."/>
            <person name="Amedeo P."/>
            <person name="Arensburger P."/>
            <person name="Atkinson P.W."/>
            <person name="Bidwell S.L."/>
            <person name="Biedler J."/>
            <person name="Birney E."/>
            <person name="Bruggner R.V."/>
            <person name="Costas J."/>
            <person name="Coy M.R."/>
            <person name="Crabtree J."/>
            <person name="Crawford M."/>
            <person name="DeBruyn B."/>
            <person name="DeCaprio D."/>
            <person name="Eiglmeier K."/>
            <person name="Eisenstadt E."/>
            <person name="El-Dorry H."/>
            <person name="Gelbart W.M."/>
            <person name="Gomes S.L."/>
            <person name="Hammond M."/>
            <person name="Hannick L.I."/>
            <person name="Hogan J.R."/>
            <person name="Holmes M.H."/>
            <person name="Jaffe D."/>
            <person name="Johnston S.J."/>
            <person name="Kennedy R.C."/>
            <person name="Koo H."/>
            <person name="Kravitz S."/>
            <person name="Kriventseva E.V."/>
            <person name="Kulp D."/>
            <person name="Labutti K."/>
            <person name="Lee E."/>
            <person name="Li S."/>
            <person name="Lovin D.D."/>
            <person name="Mao C."/>
            <person name="Mauceli E."/>
            <person name="Menck C.F."/>
            <person name="Miller J.R."/>
            <person name="Montgomery P."/>
            <person name="Mori A."/>
            <person name="Nascimento A.L."/>
            <person name="Naveira H.F."/>
            <person name="Nusbaum C."/>
            <person name="O'Leary S.B."/>
            <person name="Orvis J."/>
            <person name="Pertea M."/>
            <person name="Quesneville H."/>
            <person name="Reidenbach K.R."/>
            <person name="Rogers Y.-H.C."/>
            <person name="Roth C.W."/>
            <person name="Schneider J.R."/>
            <person name="Schatz M."/>
            <person name="Shumway M."/>
            <person name="Stanke M."/>
            <person name="Stinson E.O."/>
            <person name="Tubio J.M.C."/>
            <person name="Vanzee J.P."/>
            <person name="Verjovski-Almeida S."/>
            <person name="Werner D."/>
            <person name="White O.R."/>
            <person name="Wyder S."/>
            <person name="Zeng Q."/>
            <person name="Zhao Q."/>
            <person name="Zhao Y."/>
            <person name="Hill C.A."/>
            <person name="Raikhel A.S."/>
            <person name="Soares M.B."/>
            <person name="Knudson D.L."/>
            <person name="Lee N.H."/>
            <person name="Galagan J."/>
            <person name="Salzberg S.L."/>
            <person name="Paulsen I.T."/>
            <person name="Dimopoulos G."/>
            <person name="Collins F.H."/>
            <person name="Bruce B."/>
            <person name="Fraser-Liggett C.M."/>
            <person name="Severson D.W."/>
        </authorList>
    </citation>
    <scope>NUCLEOTIDE SEQUENCE [LARGE SCALE GENOMIC DNA]</scope>
    <source>
        <strain>LVPib12</strain>
    </source>
</reference>
<name>CISY1_AEDAE</name>
<feature type="transit peptide" description="Mitochondrion" evidence="2">
    <location>
        <begin position="1"/>
        <end status="unknown"/>
    </location>
</feature>
<feature type="chain" id="PRO_0000291601" description="Probable citrate synthase 1, mitochondrial">
    <location>
        <begin status="unknown"/>
        <end position="467"/>
    </location>
</feature>
<feature type="active site" evidence="3">
    <location>
        <position position="303"/>
    </location>
</feature>
<feature type="active site" evidence="3">
    <location>
        <position position="349"/>
    </location>
</feature>
<feature type="active site" evidence="3">
    <location>
        <position position="404"/>
    </location>
</feature>
<comment type="catalytic activity">
    <reaction evidence="3">
        <text>oxaloacetate + acetyl-CoA + H2O = citrate + CoA + H(+)</text>
        <dbReference type="Rhea" id="RHEA:16845"/>
        <dbReference type="ChEBI" id="CHEBI:15377"/>
        <dbReference type="ChEBI" id="CHEBI:15378"/>
        <dbReference type="ChEBI" id="CHEBI:16452"/>
        <dbReference type="ChEBI" id="CHEBI:16947"/>
        <dbReference type="ChEBI" id="CHEBI:57287"/>
        <dbReference type="ChEBI" id="CHEBI:57288"/>
        <dbReference type="EC" id="2.3.3.16"/>
    </reaction>
</comment>
<comment type="pathway">
    <text>Carbohydrate metabolism; tricarboxylic acid cycle; isocitrate from oxaloacetate: step 1/2.</text>
</comment>
<comment type="subunit">
    <text evidence="1">Homodimer.</text>
</comment>
<comment type="subcellular location">
    <subcellularLocation>
        <location evidence="1">Mitochondrion matrix</location>
    </subcellularLocation>
</comment>
<comment type="miscellaneous">
    <text>Citrate synthase is found in nearly all cells capable of oxidative metabolism.</text>
</comment>
<comment type="similarity">
    <text evidence="4">Belongs to the citrate synthase family.</text>
</comment>
<evidence type="ECO:0000250" key="1"/>
<evidence type="ECO:0000255" key="2"/>
<evidence type="ECO:0000255" key="3">
    <source>
        <dbReference type="PROSITE-ProRule" id="PRU10117"/>
    </source>
</evidence>
<evidence type="ECO:0000305" key="4"/>
<dbReference type="EC" id="2.3.3.16"/>
<dbReference type="EMBL" id="CH477258">
    <property type="protein sequence ID" value="EAT45772.1"/>
    <property type="molecule type" value="Genomic_DNA"/>
</dbReference>
<dbReference type="RefSeq" id="XP_001656210.1">
    <property type="nucleotide sequence ID" value="XM_001656160.1"/>
</dbReference>
<dbReference type="SMR" id="Q17GM7"/>
<dbReference type="FunCoup" id="Q17GM7">
    <property type="interactions" value="1276"/>
</dbReference>
<dbReference type="STRING" id="7159.Q17GM7"/>
<dbReference type="PaxDb" id="7159-AAEL002956-PA"/>
<dbReference type="VEuPathDB" id="VectorBase:AAEL011789"/>
<dbReference type="eggNOG" id="KOG2617">
    <property type="taxonomic scope" value="Eukaryota"/>
</dbReference>
<dbReference type="HOGENOM" id="CLU_022049_2_1_1"/>
<dbReference type="InParanoid" id="Q17GM7"/>
<dbReference type="OMA" id="YTVIFGI"/>
<dbReference type="OrthoDB" id="8017587at2759"/>
<dbReference type="PhylomeDB" id="Q17GM7"/>
<dbReference type="UniPathway" id="UPA00223">
    <property type="reaction ID" value="UER00717"/>
</dbReference>
<dbReference type="Proteomes" id="UP000008820">
    <property type="component" value="Unassembled WGS sequence"/>
</dbReference>
<dbReference type="Proteomes" id="UP000682892">
    <property type="component" value="Chromosome 1"/>
</dbReference>
<dbReference type="GO" id="GO:0005759">
    <property type="term" value="C:mitochondrial matrix"/>
    <property type="evidence" value="ECO:0000250"/>
    <property type="project" value="UniProtKB"/>
</dbReference>
<dbReference type="GO" id="GO:0004108">
    <property type="term" value="F:citrate (Si)-synthase activity"/>
    <property type="evidence" value="ECO:0000250"/>
    <property type="project" value="UniProtKB"/>
</dbReference>
<dbReference type="GO" id="GO:0005975">
    <property type="term" value="P:carbohydrate metabolic process"/>
    <property type="evidence" value="ECO:0000250"/>
    <property type="project" value="UniProtKB"/>
</dbReference>
<dbReference type="GO" id="GO:0006101">
    <property type="term" value="P:citrate metabolic process"/>
    <property type="evidence" value="ECO:0007669"/>
    <property type="project" value="InterPro"/>
</dbReference>
<dbReference type="GO" id="GO:0006099">
    <property type="term" value="P:tricarboxylic acid cycle"/>
    <property type="evidence" value="ECO:0007669"/>
    <property type="project" value="UniProtKB-UniPathway"/>
</dbReference>
<dbReference type="CDD" id="cd06105">
    <property type="entry name" value="ScCit1-2_like"/>
    <property type="match status" value="1"/>
</dbReference>
<dbReference type="FunFam" id="1.10.230.10:FF:000001">
    <property type="entry name" value="Citrate synthase"/>
    <property type="match status" value="1"/>
</dbReference>
<dbReference type="FunFam" id="1.10.580.10:FF:000001">
    <property type="entry name" value="Citrate synthase"/>
    <property type="match status" value="1"/>
</dbReference>
<dbReference type="Gene3D" id="1.10.580.10">
    <property type="entry name" value="Citrate Synthase, domain 1"/>
    <property type="match status" value="1"/>
</dbReference>
<dbReference type="Gene3D" id="1.10.230.10">
    <property type="entry name" value="Cytochrome P450-Terp, domain 2"/>
    <property type="match status" value="1"/>
</dbReference>
<dbReference type="InterPro" id="IPR016142">
    <property type="entry name" value="Citrate_synth-like_lrg_a-sub"/>
</dbReference>
<dbReference type="InterPro" id="IPR016143">
    <property type="entry name" value="Citrate_synth-like_sm_a-sub"/>
</dbReference>
<dbReference type="InterPro" id="IPR002020">
    <property type="entry name" value="Citrate_synthase"/>
</dbReference>
<dbReference type="InterPro" id="IPR019810">
    <property type="entry name" value="Citrate_synthase_AS"/>
</dbReference>
<dbReference type="InterPro" id="IPR010109">
    <property type="entry name" value="Citrate_synthase_euk"/>
</dbReference>
<dbReference type="InterPro" id="IPR036969">
    <property type="entry name" value="Citrate_synthase_sf"/>
</dbReference>
<dbReference type="NCBIfam" id="TIGR01793">
    <property type="entry name" value="cit_synth_euk"/>
    <property type="match status" value="1"/>
</dbReference>
<dbReference type="NCBIfam" id="NF007128">
    <property type="entry name" value="PRK09569.1"/>
    <property type="match status" value="1"/>
</dbReference>
<dbReference type="PANTHER" id="PTHR11739">
    <property type="entry name" value="CITRATE SYNTHASE"/>
    <property type="match status" value="1"/>
</dbReference>
<dbReference type="PANTHER" id="PTHR11739:SF8">
    <property type="entry name" value="CITRATE SYNTHASE, MITOCHONDRIAL"/>
    <property type="match status" value="1"/>
</dbReference>
<dbReference type="Pfam" id="PF00285">
    <property type="entry name" value="Citrate_synt"/>
    <property type="match status" value="1"/>
</dbReference>
<dbReference type="PRINTS" id="PR00143">
    <property type="entry name" value="CITRTSNTHASE"/>
</dbReference>
<dbReference type="SUPFAM" id="SSF48256">
    <property type="entry name" value="Citrate synthase"/>
    <property type="match status" value="1"/>
</dbReference>
<dbReference type="PROSITE" id="PS00480">
    <property type="entry name" value="CITRATE_SYNTHASE"/>
    <property type="match status" value="1"/>
</dbReference>
<gene>
    <name type="ORF">AAEL002956</name>
</gene>
<protein>
    <recommendedName>
        <fullName>Probable citrate synthase 1, mitochondrial</fullName>
        <ecNumber>2.3.3.16</ecNumber>
    </recommendedName>
</protein>
<organism>
    <name type="scientific">Aedes aegypti</name>
    <name type="common">Yellowfever mosquito</name>
    <name type="synonym">Culex aegypti</name>
    <dbReference type="NCBI Taxonomy" id="7159"/>
    <lineage>
        <taxon>Eukaryota</taxon>
        <taxon>Metazoa</taxon>
        <taxon>Ecdysozoa</taxon>
        <taxon>Arthropoda</taxon>
        <taxon>Hexapoda</taxon>
        <taxon>Insecta</taxon>
        <taxon>Pterygota</taxon>
        <taxon>Neoptera</taxon>
        <taxon>Endopterygota</taxon>
        <taxon>Diptera</taxon>
        <taxon>Nematocera</taxon>
        <taxon>Culicoidea</taxon>
        <taxon>Culicidae</taxon>
        <taxon>Culicinae</taxon>
        <taxon>Aedini</taxon>
        <taxon>Aedes</taxon>
        <taxon>Stegomyia</taxon>
    </lineage>
</organism>
<sequence>MALSRIYSSKLASANKNLLPVITTYVRNASDSTDLKAVLSEKIPKEQERVKNFRKQFGATKVGEVTVDMMYGGMRGIKGLVCETSVLDPDEGIRFRGLSIPECQKVLPKAPGGAEPLPEGLFWLLITGDVPTKAQVDALSREWANRAALPSHVVTMLNNMPTTLHPMSQLSCAVTALNHESKYAKAYSEGVHKSKYWEYVYEDSMDLIAKLPVVAATIYRNTYRDGKGIGAIDPKKDWSANFTKMLGYEDEQFTELMRLYLTIHSDHEGGNVSAHTVHLVGSALSDPYLSFAAGMNGLAGPLHGLANQEVLVWLQKLRKELGDNASEDKVKDFIWKTLKSGQVVPGYGHAVLRKTDPRYTCQREFALKHLPNDPLFQLVSNIYKVVPPILTELGKVKNPWPNVDAHSGVLLQYYGLKEMNYYTVLFGVSRALGVLASLVWDRALGLPIERPKSMSTDGLMKAVGASK</sequence>
<proteinExistence type="inferred from homology"/>